<name>CASP1_SORBI</name>
<evidence type="ECO:0000250" key="1"/>
<evidence type="ECO:0000255" key="2"/>
<evidence type="ECO:0000305" key="3"/>
<protein>
    <recommendedName>
        <fullName>Casparian strip membrane protein 1</fullName>
        <shortName>SbCASP1</shortName>
    </recommendedName>
</protein>
<keyword id="KW-1003">Cell membrane</keyword>
<keyword id="KW-0961">Cell wall biogenesis/degradation</keyword>
<keyword id="KW-0472">Membrane</keyword>
<keyword id="KW-1185">Reference proteome</keyword>
<keyword id="KW-0812">Transmembrane</keyword>
<keyword id="KW-1133">Transmembrane helix</keyword>
<accession>C5YAP3</accession>
<feature type="chain" id="PRO_0000391575" description="Casparian strip membrane protein 1">
    <location>
        <begin position="1"/>
        <end position="229"/>
    </location>
</feature>
<feature type="topological domain" description="Cytoplasmic" evidence="2">
    <location>
        <begin position="1"/>
        <end position="67"/>
    </location>
</feature>
<feature type="transmembrane region" description="Helical" evidence="2">
    <location>
        <begin position="68"/>
        <end position="88"/>
    </location>
</feature>
<feature type="topological domain" description="Extracellular" evidence="2">
    <location>
        <begin position="89"/>
        <end position="115"/>
    </location>
</feature>
<feature type="transmembrane region" description="Helical" evidence="2">
    <location>
        <begin position="116"/>
        <end position="136"/>
    </location>
</feature>
<feature type="topological domain" description="Cytoplasmic" evidence="2">
    <location>
        <begin position="137"/>
        <end position="157"/>
    </location>
</feature>
<feature type="transmembrane region" description="Helical" evidence="2">
    <location>
        <begin position="158"/>
        <end position="178"/>
    </location>
</feature>
<feature type="topological domain" description="Extracellular" evidence="2">
    <location>
        <begin position="179"/>
        <end position="205"/>
    </location>
</feature>
<feature type="transmembrane region" description="Helical" evidence="2">
    <location>
        <begin position="206"/>
        <end position="226"/>
    </location>
</feature>
<feature type="topological domain" description="Cytoplasmic" evidence="2">
    <location>
        <begin position="227"/>
        <end position="229"/>
    </location>
</feature>
<dbReference type="EMBL" id="CM000765">
    <property type="protein sequence ID" value="EES11679.1"/>
    <property type="molecule type" value="Genomic_DNA"/>
</dbReference>
<dbReference type="FunCoup" id="C5YAP3">
    <property type="interactions" value="7"/>
</dbReference>
<dbReference type="STRING" id="4558.C5YAP3"/>
<dbReference type="EnsemblPlants" id="EES11679">
    <property type="protein sequence ID" value="EES11679"/>
    <property type="gene ID" value="SORBI_3006G273300"/>
</dbReference>
<dbReference type="Gramene" id="EES11679">
    <property type="protein sequence ID" value="EES11679"/>
    <property type="gene ID" value="SORBI_3006G273300"/>
</dbReference>
<dbReference type="KEGG" id="sbi:8076491"/>
<dbReference type="eggNOG" id="ENOG502RJHP">
    <property type="taxonomic scope" value="Eukaryota"/>
</dbReference>
<dbReference type="HOGENOM" id="CLU_066104_3_1_1"/>
<dbReference type="InParanoid" id="C5YAP3"/>
<dbReference type="OMA" id="TSANWIA"/>
<dbReference type="OrthoDB" id="753675at2759"/>
<dbReference type="Proteomes" id="UP000000768">
    <property type="component" value="Chromosome 6"/>
</dbReference>
<dbReference type="GO" id="GO:0005886">
    <property type="term" value="C:plasma membrane"/>
    <property type="evidence" value="ECO:0007669"/>
    <property type="project" value="UniProtKB-SubCell"/>
</dbReference>
<dbReference type="GO" id="GO:0071555">
    <property type="term" value="P:cell wall organization"/>
    <property type="evidence" value="ECO:0007669"/>
    <property type="project" value="UniProtKB-KW"/>
</dbReference>
<dbReference type="InterPro" id="IPR006459">
    <property type="entry name" value="CASP/CASPL"/>
</dbReference>
<dbReference type="InterPro" id="IPR006702">
    <property type="entry name" value="CASP_dom"/>
</dbReference>
<dbReference type="InterPro" id="IPR044173">
    <property type="entry name" value="CASPL"/>
</dbReference>
<dbReference type="NCBIfam" id="TIGR01569">
    <property type="entry name" value="A_tha_TIGR01569"/>
    <property type="match status" value="1"/>
</dbReference>
<dbReference type="PANTHER" id="PTHR36488:SF11">
    <property type="entry name" value="CASP-LIKE PROTEIN"/>
    <property type="match status" value="1"/>
</dbReference>
<dbReference type="PANTHER" id="PTHR36488">
    <property type="entry name" value="CASP-LIKE PROTEIN 1U1"/>
    <property type="match status" value="1"/>
</dbReference>
<dbReference type="Pfam" id="PF04535">
    <property type="entry name" value="CASP_dom"/>
    <property type="match status" value="1"/>
</dbReference>
<organism>
    <name type="scientific">Sorghum bicolor</name>
    <name type="common">Sorghum</name>
    <name type="synonym">Sorghum vulgare</name>
    <dbReference type="NCBI Taxonomy" id="4558"/>
    <lineage>
        <taxon>Eukaryota</taxon>
        <taxon>Viridiplantae</taxon>
        <taxon>Streptophyta</taxon>
        <taxon>Embryophyta</taxon>
        <taxon>Tracheophyta</taxon>
        <taxon>Spermatophyta</taxon>
        <taxon>Magnoliopsida</taxon>
        <taxon>Liliopsida</taxon>
        <taxon>Poales</taxon>
        <taxon>Poaceae</taxon>
        <taxon>PACMAD clade</taxon>
        <taxon>Panicoideae</taxon>
        <taxon>Andropogonodae</taxon>
        <taxon>Andropogoneae</taxon>
        <taxon>Sorghinae</taxon>
        <taxon>Sorghum</taxon>
    </lineage>
</organism>
<comment type="function">
    <text evidence="1">Regulates membrane-cell wall junctions and localized cell wall deposition. Required for establishment of the Casparian strip membrane domain (CSD) and the subsequent formation of Casparian strips, a cell wall modification of the root endodermis that determines an apoplastic barrier between the intraorganismal apoplasm and the extraorganismal apoplasm and prevents lateral diffusion (By similarity).</text>
</comment>
<comment type="subunit">
    <text evidence="1">Homodimer and heterodimers.</text>
</comment>
<comment type="subcellular location">
    <subcellularLocation>
        <location evidence="1">Cell membrane</location>
        <topology evidence="1">Multi-pass membrane protein</topology>
    </subcellularLocation>
    <text evidence="1">Very restricted localization following a belt shape within the plasma membrane which coincides with the position of the Casparian strip membrane domain in the root endodermis.</text>
</comment>
<comment type="similarity">
    <text evidence="3">Belongs to the Casparian strip membrane proteins (CASP) family.</text>
</comment>
<reference key="1">
    <citation type="journal article" date="2009" name="Nature">
        <title>The Sorghum bicolor genome and the diversification of grasses.</title>
        <authorList>
            <person name="Paterson A.H."/>
            <person name="Bowers J.E."/>
            <person name="Bruggmann R."/>
            <person name="Dubchak I."/>
            <person name="Grimwood J."/>
            <person name="Gundlach H."/>
            <person name="Haberer G."/>
            <person name="Hellsten U."/>
            <person name="Mitros T."/>
            <person name="Poliakov A."/>
            <person name="Schmutz J."/>
            <person name="Spannagl M."/>
            <person name="Tang H."/>
            <person name="Wang X."/>
            <person name="Wicker T."/>
            <person name="Bharti A.K."/>
            <person name="Chapman J."/>
            <person name="Feltus F.A."/>
            <person name="Gowik U."/>
            <person name="Grigoriev I.V."/>
            <person name="Lyons E."/>
            <person name="Maher C.A."/>
            <person name="Martis M."/>
            <person name="Narechania A."/>
            <person name="Otillar R.P."/>
            <person name="Penning B.W."/>
            <person name="Salamov A.A."/>
            <person name="Wang Y."/>
            <person name="Zhang L."/>
            <person name="Carpita N.C."/>
            <person name="Freeling M."/>
            <person name="Gingle A.R."/>
            <person name="Hash C.T."/>
            <person name="Keller B."/>
            <person name="Klein P."/>
            <person name="Kresovich S."/>
            <person name="McCann M.C."/>
            <person name="Ming R."/>
            <person name="Peterson D.G."/>
            <person name="Mehboob-ur-Rahman M."/>
            <person name="Ware D."/>
            <person name="Westhoff P."/>
            <person name="Mayer K.F.X."/>
            <person name="Messing J."/>
            <person name="Rokhsar D.S."/>
        </authorList>
    </citation>
    <scope>NUCLEOTIDE SEQUENCE [LARGE SCALE GENOMIC DNA]</scope>
    <source>
        <strain>cv. BTx623</strain>
    </source>
</reference>
<reference key="2">
    <citation type="journal article" date="2018" name="Plant J.">
        <title>The Sorghum bicolor reference genome: improved assembly, gene annotations, a transcriptome atlas, and signatures of genome organization.</title>
        <authorList>
            <person name="McCormick R.F."/>
            <person name="Truong S.K."/>
            <person name="Sreedasyam A."/>
            <person name="Jenkins J."/>
            <person name="Shu S."/>
            <person name="Sims D."/>
            <person name="Kennedy M."/>
            <person name="Amirebrahimi M."/>
            <person name="Weers B.D."/>
            <person name="McKinley B."/>
            <person name="Mattison A."/>
            <person name="Morishige D.T."/>
            <person name="Grimwood J."/>
            <person name="Schmutz J."/>
            <person name="Mullet J.E."/>
        </authorList>
    </citation>
    <scope>GENOME REANNOTATION</scope>
    <source>
        <strain>cv. BTx623</strain>
    </source>
</reference>
<reference key="3">
    <citation type="journal article" date="2014" name="Plant Physiol.">
        <title>Functional and evolutionary analysis of the CASPARIAN STRIP MEMBRANE DOMAIN PROTEIN family.</title>
        <authorList>
            <person name="Roppolo D."/>
            <person name="Boeckmann B."/>
            <person name="Pfister A."/>
            <person name="Boutet E."/>
            <person name="Rubio M.C."/>
            <person name="Denervaud-Tendon V."/>
            <person name="Vermeer J.E."/>
            <person name="Gheyselinck J."/>
            <person name="Xenarios I."/>
            <person name="Geldner N."/>
        </authorList>
    </citation>
    <scope>GENE FAMILY</scope>
    <scope>NOMENCLATURE</scope>
</reference>
<gene>
    <name type="ordered locus">Sb06g033470</name>
</gene>
<proteinExistence type="evidence at transcript level"/>
<sequence>MSTSEAGAAATVIPIDDVARDHGKAPAVATAPPPPAAAAAVPAAATTTAPRKTGVPFFRRADRGSRCVALLDFVLRVAAFGPALAAAIATGTSDETLSVFTQFFQFHARFDDFPALLFFMVANAIAAGYLVLSLPFSAVIVLRPQAIGLRHLLLVCDMIIAALLTAAAAAAAAIVDLAHSGNLRANWVPICMQFHGFCQRTSGAVVGSFLAVLVLLFLVILAAFAIRKR</sequence>